<name>PURT_YERPE</name>
<accession>Q7CHW4</accession>
<accession>Q74UT0</accession>
<comment type="function">
    <text evidence="1">Involved in the de novo purine biosynthesis. Catalyzes the transfer of formate to 5-phospho-ribosyl-glycinamide (GAR), producing 5-phospho-ribosyl-N-formylglycinamide (FGAR). Formate is provided by PurU via hydrolysis of 10-formyl-tetrahydrofolate.</text>
</comment>
<comment type="catalytic activity">
    <reaction evidence="1">
        <text>N(1)-(5-phospho-beta-D-ribosyl)glycinamide + formate + ATP = N(2)-formyl-N(1)-(5-phospho-beta-D-ribosyl)glycinamide + ADP + phosphate + H(+)</text>
        <dbReference type="Rhea" id="RHEA:24829"/>
        <dbReference type="ChEBI" id="CHEBI:15378"/>
        <dbReference type="ChEBI" id="CHEBI:15740"/>
        <dbReference type="ChEBI" id="CHEBI:30616"/>
        <dbReference type="ChEBI" id="CHEBI:43474"/>
        <dbReference type="ChEBI" id="CHEBI:143788"/>
        <dbReference type="ChEBI" id="CHEBI:147286"/>
        <dbReference type="ChEBI" id="CHEBI:456216"/>
        <dbReference type="EC" id="6.3.1.21"/>
    </reaction>
    <physiologicalReaction direction="left-to-right" evidence="1">
        <dbReference type="Rhea" id="RHEA:24830"/>
    </physiologicalReaction>
</comment>
<comment type="pathway">
    <text evidence="1">Purine metabolism; IMP biosynthesis via de novo pathway; N(2)-formyl-N(1)-(5-phospho-D-ribosyl)glycinamide from N(1)-(5-phospho-D-ribosyl)glycinamide (formate route): step 1/1.</text>
</comment>
<comment type="subunit">
    <text evidence="1">Homodimer.</text>
</comment>
<comment type="similarity">
    <text evidence="1">Belongs to the PurK/PurT family.</text>
</comment>
<dbReference type="EC" id="6.3.1.21" evidence="1"/>
<dbReference type="EMBL" id="AE009952">
    <property type="protein sequence ID" value="AAM86088.1"/>
    <property type="molecule type" value="Genomic_DNA"/>
</dbReference>
<dbReference type="EMBL" id="AE017042">
    <property type="protein sequence ID" value="AAS61851.1"/>
    <property type="molecule type" value="Genomic_DNA"/>
</dbReference>
<dbReference type="EMBL" id="AL590842">
    <property type="protein sequence ID" value="CAL20416.1"/>
    <property type="molecule type" value="Genomic_DNA"/>
</dbReference>
<dbReference type="PIR" id="AE0216">
    <property type="entry name" value="AE0216"/>
</dbReference>
<dbReference type="RefSeq" id="WP_002211083.1">
    <property type="nucleotide sequence ID" value="NZ_WUCM01000019.1"/>
</dbReference>
<dbReference type="RefSeq" id="YP_002346772.1">
    <property type="nucleotide sequence ID" value="NC_003143.1"/>
</dbReference>
<dbReference type="SMR" id="Q7CHW4"/>
<dbReference type="IntAct" id="Q7CHW4">
    <property type="interactions" value="8"/>
</dbReference>
<dbReference type="STRING" id="214092.YPO1775"/>
<dbReference type="PaxDb" id="214092-YPO1775"/>
<dbReference type="DNASU" id="1147479"/>
<dbReference type="EnsemblBacteria" id="AAS61851">
    <property type="protein sequence ID" value="AAS61851"/>
    <property type="gene ID" value="YP_1618"/>
</dbReference>
<dbReference type="GeneID" id="57976805"/>
<dbReference type="KEGG" id="ype:YPO1775"/>
<dbReference type="KEGG" id="ypk:y2533"/>
<dbReference type="KEGG" id="ypm:YP_1618"/>
<dbReference type="PATRIC" id="fig|214092.21.peg.2133"/>
<dbReference type="eggNOG" id="COG0027">
    <property type="taxonomic scope" value="Bacteria"/>
</dbReference>
<dbReference type="HOGENOM" id="CLU_011534_1_3_6"/>
<dbReference type="OMA" id="GMVTMIT"/>
<dbReference type="OrthoDB" id="9804625at2"/>
<dbReference type="UniPathway" id="UPA00074">
    <property type="reaction ID" value="UER00127"/>
</dbReference>
<dbReference type="Proteomes" id="UP000000815">
    <property type="component" value="Chromosome"/>
</dbReference>
<dbReference type="Proteomes" id="UP000001019">
    <property type="component" value="Chromosome"/>
</dbReference>
<dbReference type="Proteomes" id="UP000002490">
    <property type="component" value="Chromosome"/>
</dbReference>
<dbReference type="GO" id="GO:0005829">
    <property type="term" value="C:cytosol"/>
    <property type="evidence" value="ECO:0000318"/>
    <property type="project" value="GO_Central"/>
</dbReference>
<dbReference type="GO" id="GO:0005524">
    <property type="term" value="F:ATP binding"/>
    <property type="evidence" value="ECO:0007669"/>
    <property type="project" value="UniProtKB-UniRule"/>
</dbReference>
<dbReference type="GO" id="GO:0000287">
    <property type="term" value="F:magnesium ion binding"/>
    <property type="evidence" value="ECO:0007669"/>
    <property type="project" value="InterPro"/>
</dbReference>
<dbReference type="GO" id="GO:0043815">
    <property type="term" value="F:phosphoribosylglycinamide formyltransferase 2 activity"/>
    <property type="evidence" value="ECO:0007669"/>
    <property type="project" value="UniProtKB-UniRule"/>
</dbReference>
<dbReference type="GO" id="GO:0004644">
    <property type="term" value="F:phosphoribosylglycinamide formyltransferase activity"/>
    <property type="evidence" value="ECO:0007669"/>
    <property type="project" value="InterPro"/>
</dbReference>
<dbReference type="GO" id="GO:0006189">
    <property type="term" value="P:'de novo' IMP biosynthetic process"/>
    <property type="evidence" value="ECO:0007669"/>
    <property type="project" value="UniProtKB-UniRule"/>
</dbReference>
<dbReference type="FunFam" id="3.30.1490.20:FF:000013">
    <property type="entry name" value="Formate-dependent phosphoribosylglycinamide formyltransferase"/>
    <property type="match status" value="1"/>
</dbReference>
<dbReference type="FunFam" id="3.30.470.20:FF:000027">
    <property type="entry name" value="Formate-dependent phosphoribosylglycinamide formyltransferase"/>
    <property type="match status" value="1"/>
</dbReference>
<dbReference type="FunFam" id="3.40.50.20:FF:000007">
    <property type="entry name" value="Formate-dependent phosphoribosylglycinamide formyltransferase"/>
    <property type="match status" value="1"/>
</dbReference>
<dbReference type="Gene3D" id="3.40.50.20">
    <property type="match status" value="1"/>
</dbReference>
<dbReference type="Gene3D" id="3.30.1490.20">
    <property type="entry name" value="ATP-grasp fold, A domain"/>
    <property type="match status" value="1"/>
</dbReference>
<dbReference type="Gene3D" id="3.30.470.20">
    <property type="entry name" value="ATP-grasp fold, B domain"/>
    <property type="match status" value="1"/>
</dbReference>
<dbReference type="HAMAP" id="MF_01643">
    <property type="entry name" value="PurT"/>
    <property type="match status" value="1"/>
</dbReference>
<dbReference type="InterPro" id="IPR011761">
    <property type="entry name" value="ATP-grasp"/>
</dbReference>
<dbReference type="InterPro" id="IPR003135">
    <property type="entry name" value="ATP-grasp_carboxylate-amine"/>
</dbReference>
<dbReference type="InterPro" id="IPR013815">
    <property type="entry name" value="ATP_grasp_subdomain_1"/>
</dbReference>
<dbReference type="InterPro" id="IPR016185">
    <property type="entry name" value="PreATP-grasp_dom_sf"/>
</dbReference>
<dbReference type="InterPro" id="IPR005862">
    <property type="entry name" value="PurT"/>
</dbReference>
<dbReference type="InterPro" id="IPR054350">
    <property type="entry name" value="PurT/PurK_preATP-grasp"/>
</dbReference>
<dbReference type="InterPro" id="IPR048740">
    <property type="entry name" value="PurT_C"/>
</dbReference>
<dbReference type="InterPro" id="IPR011054">
    <property type="entry name" value="Rudment_hybrid_motif"/>
</dbReference>
<dbReference type="NCBIfam" id="NF006766">
    <property type="entry name" value="PRK09288.1"/>
    <property type="match status" value="1"/>
</dbReference>
<dbReference type="NCBIfam" id="TIGR01142">
    <property type="entry name" value="purT"/>
    <property type="match status" value="1"/>
</dbReference>
<dbReference type="PANTHER" id="PTHR43055">
    <property type="entry name" value="FORMATE-DEPENDENT PHOSPHORIBOSYLGLYCINAMIDE FORMYLTRANSFERASE"/>
    <property type="match status" value="1"/>
</dbReference>
<dbReference type="PANTHER" id="PTHR43055:SF1">
    <property type="entry name" value="FORMATE-DEPENDENT PHOSPHORIBOSYLGLYCINAMIDE FORMYLTRANSFERASE"/>
    <property type="match status" value="1"/>
</dbReference>
<dbReference type="Pfam" id="PF02222">
    <property type="entry name" value="ATP-grasp"/>
    <property type="match status" value="1"/>
</dbReference>
<dbReference type="Pfam" id="PF21244">
    <property type="entry name" value="PurT_C"/>
    <property type="match status" value="1"/>
</dbReference>
<dbReference type="Pfam" id="PF22660">
    <property type="entry name" value="RS_preATP-grasp-like"/>
    <property type="match status" value="1"/>
</dbReference>
<dbReference type="SUPFAM" id="SSF56059">
    <property type="entry name" value="Glutathione synthetase ATP-binding domain-like"/>
    <property type="match status" value="1"/>
</dbReference>
<dbReference type="SUPFAM" id="SSF52440">
    <property type="entry name" value="PreATP-grasp domain"/>
    <property type="match status" value="1"/>
</dbReference>
<dbReference type="SUPFAM" id="SSF51246">
    <property type="entry name" value="Rudiment single hybrid motif"/>
    <property type="match status" value="1"/>
</dbReference>
<dbReference type="PROSITE" id="PS50975">
    <property type="entry name" value="ATP_GRASP"/>
    <property type="match status" value="1"/>
</dbReference>
<proteinExistence type="inferred from homology"/>
<keyword id="KW-0067">ATP-binding</keyword>
<keyword id="KW-0436">Ligase</keyword>
<keyword id="KW-0460">Magnesium</keyword>
<keyword id="KW-0479">Metal-binding</keyword>
<keyword id="KW-0547">Nucleotide-binding</keyword>
<keyword id="KW-0658">Purine biosynthesis</keyword>
<keyword id="KW-1185">Reference proteome</keyword>
<protein>
    <recommendedName>
        <fullName evidence="1">Formate-dependent phosphoribosylglycinamide formyltransferase</fullName>
        <ecNumber evidence="1">6.3.1.21</ecNumber>
    </recommendedName>
    <alternativeName>
        <fullName evidence="1">5'-phosphoribosylglycinamide transformylase 2</fullName>
    </alternativeName>
    <alternativeName>
        <fullName evidence="1">Formate-dependent GAR transformylase</fullName>
    </alternativeName>
    <alternativeName>
        <fullName evidence="1">GAR transformylase 2</fullName>
        <shortName evidence="1">GART 2</shortName>
    </alternativeName>
    <alternativeName>
        <fullName evidence="1">Non-folate glycinamide ribonucleotide transformylase</fullName>
    </alternativeName>
    <alternativeName>
        <fullName evidence="1">Phosphoribosylglycinamide formyltransferase 2</fullName>
    </alternativeName>
</protein>
<reference key="1">
    <citation type="journal article" date="2002" name="J. Bacteriol.">
        <title>Genome sequence of Yersinia pestis KIM.</title>
        <authorList>
            <person name="Deng W."/>
            <person name="Burland V."/>
            <person name="Plunkett G. III"/>
            <person name="Boutin A."/>
            <person name="Mayhew G.F."/>
            <person name="Liss P."/>
            <person name="Perna N.T."/>
            <person name="Rose D.J."/>
            <person name="Mau B."/>
            <person name="Zhou S."/>
            <person name="Schwartz D.C."/>
            <person name="Fetherston J.D."/>
            <person name="Lindler L.E."/>
            <person name="Brubaker R.R."/>
            <person name="Plano G.V."/>
            <person name="Straley S.C."/>
            <person name="McDonough K.A."/>
            <person name="Nilles M.L."/>
            <person name="Matson J.S."/>
            <person name="Blattner F.R."/>
            <person name="Perry R.D."/>
        </authorList>
    </citation>
    <scope>NUCLEOTIDE SEQUENCE [LARGE SCALE GENOMIC DNA]</scope>
    <source>
        <strain>KIM10+ / Biovar Mediaevalis</strain>
    </source>
</reference>
<reference key="2">
    <citation type="journal article" date="2001" name="Nature">
        <title>Genome sequence of Yersinia pestis, the causative agent of plague.</title>
        <authorList>
            <person name="Parkhill J."/>
            <person name="Wren B.W."/>
            <person name="Thomson N.R."/>
            <person name="Titball R.W."/>
            <person name="Holden M.T.G."/>
            <person name="Prentice M.B."/>
            <person name="Sebaihia M."/>
            <person name="James K.D."/>
            <person name="Churcher C.M."/>
            <person name="Mungall K.L."/>
            <person name="Baker S."/>
            <person name="Basham D."/>
            <person name="Bentley S.D."/>
            <person name="Brooks K."/>
            <person name="Cerdeno-Tarraga A.-M."/>
            <person name="Chillingworth T."/>
            <person name="Cronin A."/>
            <person name="Davies R.M."/>
            <person name="Davis P."/>
            <person name="Dougan G."/>
            <person name="Feltwell T."/>
            <person name="Hamlin N."/>
            <person name="Holroyd S."/>
            <person name="Jagels K."/>
            <person name="Karlyshev A.V."/>
            <person name="Leather S."/>
            <person name="Moule S."/>
            <person name="Oyston P.C.F."/>
            <person name="Quail M.A."/>
            <person name="Rutherford K.M."/>
            <person name="Simmonds M."/>
            <person name="Skelton J."/>
            <person name="Stevens K."/>
            <person name="Whitehead S."/>
            <person name="Barrell B.G."/>
        </authorList>
    </citation>
    <scope>NUCLEOTIDE SEQUENCE [LARGE SCALE GENOMIC DNA]</scope>
    <source>
        <strain>CO-92 / Biovar Orientalis</strain>
    </source>
</reference>
<reference key="3">
    <citation type="journal article" date="2004" name="DNA Res.">
        <title>Complete genome sequence of Yersinia pestis strain 91001, an isolate avirulent to humans.</title>
        <authorList>
            <person name="Song Y."/>
            <person name="Tong Z."/>
            <person name="Wang J."/>
            <person name="Wang L."/>
            <person name="Guo Z."/>
            <person name="Han Y."/>
            <person name="Zhang J."/>
            <person name="Pei D."/>
            <person name="Zhou D."/>
            <person name="Qin H."/>
            <person name="Pang X."/>
            <person name="Han Y."/>
            <person name="Zhai J."/>
            <person name="Li M."/>
            <person name="Cui B."/>
            <person name="Qi Z."/>
            <person name="Jin L."/>
            <person name="Dai R."/>
            <person name="Chen F."/>
            <person name="Li S."/>
            <person name="Ye C."/>
            <person name="Du Z."/>
            <person name="Lin W."/>
            <person name="Wang J."/>
            <person name="Yu J."/>
            <person name="Yang H."/>
            <person name="Wang J."/>
            <person name="Huang P."/>
            <person name="Yang R."/>
        </authorList>
    </citation>
    <scope>NUCLEOTIDE SEQUENCE [LARGE SCALE GENOMIC DNA]</scope>
    <source>
        <strain>91001 / Biovar Mediaevalis</strain>
    </source>
</reference>
<gene>
    <name evidence="1" type="primary">purT</name>
    <name type="ordered locus">YPO1775</name>
    <name type="ordered locus">y2533</name>
    <name type="ordered locus">YP_1618</name>
</gene>
<feature type="chain" id="PRO_0000319271" description="Formate-dependent phosphoribosylglycinamide formyltransferase">
    <location>
        <begin position="1"/>
        <end position="393"/>
    </location>
</feature>
<feature type="domain" description="ATP-grasp" evidence="1">
    <location>
        <begin position="119"/>
        <end position="308"/>
    </location>
</feature>
<feature type="binding site" evidence="1">
    <location>
        <begin position="22"/>
        <end position="23"/>
    </location>
    <ligand>
        <name>N(1)-(5-phospho-beta-D-ribosyl)glycinamide</name>
        <dbReference type="ChEBI" id="CHEBI:143788"/>
    </ligand>
</feature>
<feature type="binding site" evidence="1">
    <location>
        <position position="82"/>
    </location>
    <ligand>
        <name>N(1)-(5-phospho-beta-D-ribosyl)glycinamide</name>
        <dbReference type="ChEBI" id="CHEBI:143788"/>
    </ligand>
</feature>
<feature type="binding site" evidence="1">
    <location>
        <position position="114"/>
    </location>
    <ligand>
        <name>ATP</name>
        <dbReference type="ChEBI" id="CHEBI:30616"/>
    </ligand>
</feature>
<feature type="binding site" evidence="1">
    <location>
        <position position="155"/>
    </location>
    <ligand>
        <name>ATP</name>
        <dbReference type="ChEBI" id="CHEBI:30616"/>
    </ligand>
</feature>
<feature type="binding site" evidence="1">
    <location>
        <begin position="160"/>
        <end position="165"/>
    </location>
    <ligand>
        <name>ATP</name>
        <dbReference type="ChEBI" id="CHEBI:30616"/>
    </ligand>
</feature>
<feature type="binding site" evidence="1">
    <location>
        <begin position="195"/>
        <end position="198"/>
    </location>
    <ligand>
        <name>ATP</name>
        <dbReference type="ChEBI" id="CHEBI:30616"/>
    </ligand>
</feature>
<feature type="binding site" evidence="1">
    <location>
        <position position="203"/>
    </location>
    <ligand>
        <name>ATP</name>
        <dbReference type="ChEBI" id="CHEBI:30616"/>
    </ligand>
</feature>
<feature type="binding site" evidence="1">
    <location>
        <position position="267"/>
    </location>
    <ligand>
        <name>Mg(2+)</name>
        <dbReference type="ChEBI" id="CHEBI:18420"/>
    </ligand>
</feature>
<feature type="binding site" evidence="1">
    <location>
        <position position="279"/>
    </location>
    <ligand>
        <name>Mg(2+)</name>
        <dbReference type="ChEBI" id="CHEBI:18420"/>
    </ligand>
</feature>
<feature type="binding site" evidence="1">
    <location>
        <position position="286"/>
    </location>
    <ligand>
        <name>N(1)-(5-phospho-beta-D-ribosyl)glycinamide</name>
        <dbReference type="ChEBI" id="CHEBI:143788"/>
    </ligand>
</feature>
<feature type="binding site" evidence="1">
    <location>
        <position position="355"/>
    </location>
    <ligand>
        <name>N(1)-(5-phospho-beta-D-ribosyl)glycinamide</name>
        <dbReference type="ChEBI" id="CHEBI:143788"/>
    </ligand>
</feature>
<feature type="binding site" evidence="1">
    <location>
        <begin position="362"/>
        <end position="363"/>
    </location>
    <ligand>
        <name>N(1)-(5-phospho-beta-D-ribosyl)glycinamide</name>
        <dbReference type="ChEBI" id="CHEBI:143788"/>
    </ligand>
</feature>
<sequence>MLTIGTALRPGATRVMLLGAGELGKEVAIECQRLGLEVIAVDRYADAPAMHVAHRSHVINMLDGAALKQLVAQEKPHYIVPEIEAIATDMLVELEKMGQHVVPCAEATRLTMNREGIRRLAAETLQLPTSSYRFADTDSAFFQAVRDIGYPCIVKPVMSSSGKGQSLIRSEEHLQAAWEYAQQGGRAGSGRVIIEGLVHFDFEITLLTIRAVDGIHFCAPIGHRQEDGDYRESWQPQAMSDIALQRAKEISAQVVTALGGFGLFGVELFVCGDDVIFSEVSPRPHDTGMVTLISQNMSEFALHVRAFLGLPIGTIRQYGAAASAVILPELTSQNITYRGLETALIGDTQIRLFGKPEIAGKRRLGVALAVADNIETAIEVAKKAAGNIEVSGE</sequence>
<organism>
    <name type="scientific">Yersinia pestis</name>
    <dbReference type="NCBI Taxonomy" id="632"/>
    <lineage>
        <taxon>Bacteria</taxon>
        <taxon>Pseudomonadati</taxon>
        <taxon>Pseudomonadota</taxon>
        <taxon>Gammaproteobacteria</taxon>
        <taxon>Enterobacterales</taxon>
        <taxon>Yersiniaceae</taxon>
        <taxon>Yersinia</taxon>
    </lineage>
</organism>
<evidence type="ECO:0000255" key="1">
    <source>
        <dbReference type="HAMAP-Rule" id="MF_01643"/>
    </source>
</evidence>